<gene>
    <name evidence="1" type="primary">mutS</name>
    <name type="ordered locus">Bcenmc03_2107</name>
</gene>
<comment type="function">
    <text evidence="1">This protein is involved in the repair of mismatches in DNA. It is possible that it carries out the mismatch recognition step. This protein has a weak ATPase activity.</text>
</comment>
<comment type="similarity">
    <text evidence="1">Belongs to the DNA mismatch repair MutS family.</text>
</comment>
<evidence type="ECO:0000255" key="1">
    <source>
        <dbReference type="HAMAP-Rule" id="MF_00096"/>
    </source>
</evidence>
<feature type="chain" id="PRO_1000093610" description="DNA mismatch repair protein MutS">
    <location>
        <begin position="1"/>
        <end position="885"/>
    </location>
</feature>
<feature type="binding site" evidence="1">
    <location>
        <begin position="626"/>
        <end position="633"/>
    </location>
    <ligand>
        <name>ATP</name>
        <dbReference type="ChEBI" id="CHEBI:30616"/>
    </ligand>
</feature>
<name>MUTS_BURO0</name>
<proteinExistence type="inferred from homology"/>
<protein>
    <recommendedName>
        <fullName evidence="1">DNA mismatch repair protein MutS</fullName>
    </recommendedName>
</protein>
<accession>B1JUW8</accession>
<keyword id="KW-0067">ATP-binding</keyword>
<keyword id="KW-0227">DNA damage</keyword>
<keyword id="KW-0234">DNA repair</keyword>
<keyword id="KW-0238">DNA-binding</keyword>
<keyword id="KW-0547">Nucleotide-binding</keyword>
<organism>
    <name type="scientific">Burkholderia orbicola (strain MC0-3)</name>
    <dbReference type="NCBI Taxonomy" id="406425"/>
    <lineage>
        <taxon>Bacteria</taxon>
        <taxon>Pseudomonadati</taxon>
        <taxon>Pseudomonadota</taxon>
        <taxon>Betaproteobacteria</taxon>
        <taxon>Burkholderiales</taxon>
        <taxon>Burkholderiaceae</taxon>
        <taxon>Burkholderia</taxon>
        <taxon>Burkholderia cepacia complex</taxon>
        <taxon>Burkholderia orbicola</taxon>
    </lineage>
</organism>
<dbReference type="EMBL" id="CP000958">
    <property type="protein sequence ID" value="ACA91268.1"/>
    <property type="molecule type" value="Genomic_DNA"/>
</dbReference>
<dbReference type="RefSeq" id="WP_012328801.1">
    <property type="nucleotide sequence ID" value="NC_010508.1"/>
</dbReference>
<dbReference type="SMR" id="B1JUW8"/>
<dbReference type="GeneID" id="83048891"/>
<dbReference type="KEGG" id="bcm:Bcenmc03_2107"/>
<dbReference type="HOGENOM" id="CLU_002472_4_0_4"/>
<dbReference type="Proteomes" id="UP000002169">
    <property type="component" value="Chromosome 1"/>
</dbReference>
<dbReference type="GO" id="GO:0005829">
    <property type="term" value="C:cytosol"/>
    <property type="evidence" value="ECO:0007669"/>
    <property type="project" value="TreeGrafter"/>
</dbReference>
<dbReference type="GO" id="GO:0005524">
    <property type="term" value="F:ATP binding"/>
    <property type="evidence" value="ECO:0007669"/>
    <property type="project" value="UniProtKB-UniRule"/>
</dbReference>
<dbReference type="GO" id="GO:0140664">
    <property type="term" value="F:ATP-dependent DNA damage sensor activity"/>
    <property type="evidence" value="ECO:0007669"/>
    <property type="project" value="InterPro"/>
</dbReference>
<dbReference type="GO" id="GO:0003684">
    <property type="term" value="F:damaged DNA binding"/>
    <property type="evidence" value="ECO:0007669"/>
    <property type="project" value="UniProtKB-UniRule"/>
</dbReference>
<dbReference type="GO" id="GO:0030983">
    <property type="term" value="F:mismatched DNA binding"/>
    <property type="evidence" value="ECO:0007669"/>
    <property type="project" value="InterPro"/>
</dbReference>
<dbReference type="GO" id="GO:0006298">
    <property type="term" value="P:mismatch repair"/>
    <property type="evidence" value="ECO:0007669"/>
    <property type="project" value="UniProtKB-UniRule"/>
</dbReference>
<dbReference type="CDD" id="cd03284">
    <property type="entry name" value="ABC_MutS1"/>
    <property type="match status" value="1"/>
</dbReference>
<dbReference type="FunFam" id="3.40.1170.10:FF:000001">
    <property type="entry name" value="DNA mismatch repair protein MutS"/>
    <property type="match status" value="1"/>
</dbReference>
<dbReference type="FunFam" id="3.40.50.300:FF:000870">
    <property type="entry name" value="MutS protein homolog 4"/>
    <property type="match status" value="1"/>
</dbReference>
<dbReference type="Gene3D" id="1.10.1420.10">
    <property type="match status" value="2"/>
</dbReference>
<dbReference type="Gene3D" id="6.10.140.430">
    <property type="match status" value="1"/>
</dbReference>
<dbReference type="Gene3D" id="3.40.1170.10">
    <property type="entry name" value="DNA repair protein MutS, domain I"/>
    <property type="match status" value="1"/>
</dbReference>
<dbReference type="Gene3D" id="3.30.420.110">
    <property type="entry name" value="MutS, connector domain"/>
    <property type="match status" value="1"/>
</dbReference>
<dbReference type="Gene3D" id="3.40.50.300">
    <property type="entry name" value="P-loop containing nucleotide triphosphate hydrolases"/>
    <property type="match status" value="1"/>
</dbReference>
<dbReference type="HAMAP" id="MF_00096">
    <property type="entry name" value="MutS"/>
    <property type="match status" value="1"/>
</dbReference>
<dbReference type="InterPro" id="IPR005748">
    <property type="entry name" value="DNA_mismatch_repair_MutS"/>
</dbReference>
<dbReference type="InterPro" id="IPR007695">
    <property type="entry name" value="DNA_mismatch_repair_MutS-lik_N"/>
</dbReference>
<dbReference type="InterPro" id="IPR017261">
    <property type="entry name" value="DNA_mismatch_repair_MutS/MSH"/>
</dbReference>
<dbReference type="InterPro" id="IPR000432">
    <property type="entry name" value="DNA_mismatch_repair_MutS_C"/>
</dbReference>
<dbReference type="InterPro" id="IPR007861">
    <property type="entry name" value="DNA_mismatch_repair_MutS_clamp"/>
</dbReference>
<dbReference type="InterPro" id="IPR007696">
    <property type="entry name" value="DNA_mismatch_repair_MutS_core"/>
</dbReference>
<dbReference type="InterPro" id="IPR016151">
    <property type="entry name" value="DNA_mismatch_repair_MutS_N"/>
</dbReference>
<dbReference type="InterPro" id="IPR036187">
    <property type="entry name" value="DNA_mismatch_repair_MutS_sf"/>
</dbReference>
<dbReference type="InterPro" id="IPR007860">
    <property type="entry name" value="DNA_mmatch_repair_MutS_con_dom"/>
</dbReference>
<dbReference type="InterPro" id="IPR045076">
    <property type="entry name" value="MutS"/>
</dbReference>
<dbReference type="InterPro" id="IPR036678">
    <property type="entry name" value="MutS_con_dom_sf"/>
</dbReference>
<dbReference type="InterPro" id="IPR027417">
    <property type="entry name" value="P-loop_NTPase"/>
</dbReference>
<dbReference type="NCBIfam" id="TIGR01070">
    <property type="entry name" value="mutS1"/>
    <property type="match status" value="1"/>
</dbReference>
<dbReference type="NCBIfam" id="NF003810">
    <property type="entry name" value="PRK05399.1"/>
    <property type="match status" value="1"/>
</dbReference>
<dbReference type="PANTHER" id="PTHR11361:SF34">
    <property type="entry name" value="DNA MISMATCH REPAIR PROTEIN MSH1, MITOCHONDRIAL"/>
    <property type="match status" value="1"/>
</dbReference>
<dbReference type="PANTHER" id="PTHR11361">
    <property type="entry name" value="DNA MISMATCH REPAIR PROTEIN MUTS FAMILY MEMBER"/>
    <property type="match status" value="1"/>
</dbReference>
<dbReference type="Pfam" id="PF01624">
    <property type="entry name" value="MutS_I"/>
    <property type="match status" value="1"/>
</dbReference>
<dbReference type="Pfam" id="PF05188">
    <property type="entry name" value="MutS_II"/>
    <property type="match status" value="1"/>
</dbReference>
<dbReference type="Pfam" id="PF05192">
    <property type="entry name" value="MutS_III"/>
    <property type="match status" value="1"/>
</dbReference>
<dbReference type="Pfam" id="PF05190">
    <property type="entry name" value="MutS_IV"/>
    <property type="match status" value="1"/>
</dbReference>
<dbReference type="Pfam" id="PF00488">
    <property type="entry name" value="MutS_V"/>
    <property type="match status" value="1"/>
</dbReference>
<dbReference type="PIRSF" id="PIRSF037677">
    <property type="entry name" value="DNA_mis_repair_Msh6"/>
    <property type="match status" value="1"/>
</dbReference>
<dbReference type="SMART" id="SM00534">
    <property type="entry name" value="MUTSac"/>
    <property type="match status" value="1"/>
</dbReference>
<dbReference type="SMART" id="SM00533">
    <property type="entry name" value="MUTSd"/>
    <property type="match status" value="1"/>
</dbReference>
<dbReference type="SUPFAM" id="SSF55271">
    <property type="entry name" value="DNA repair protein MutS, domain I"/>
    <property type="match status" value="1"/>
</dbReference>
<dbReference type="SUPFAM" id="SSF53150">
    <property type="entry name" value="DNA repair protein MutS, domain II"/>
    <property type="match status" value="1"/>
</dbReference>
<dbReference type="SUPFAM" id="SSF48334">
    <property type="entry name" value="DNA repair protein MutS, domain III"/>
    <property type="match status" value="1"/>
</dbReference>
<dbReference type="SUPFAM" id="SSF52540">
    <property type="entry name" value="P-loop containing nucleoside triphosphate hydrolases"/>
    <property type="match status" value="1"/>
</dbReference>
<dbReference type="PROSITE" id="PS00486">
    <property type="entry name" value="DNA_MISMATCH_REPAIR_2"/>
    <property type="match status" value="1"/>
</dbReference>
<sequence>MTTLSPEAFAGHTPMMQQYLRIKADHPDTLVFYRMGDFYELFFEDAEKAARLLDLTLTQRGASAGTPIKMAGVPHHAVEQYLAKLVKMGESVAICEQIGDPATSKGPVERKVVRVVTPGTLTDAALLSDKNDVYLLAMCTGHNKRGVAVNIGLAWLNLASGALRLAEIEPDQLAAALERIRPAEILTPDGATDAIPAGAGASKRVPAWHFDIASGTQRLCDQLDVASLDGFGAHSLTSACGAAGALLLYAAATQGQQLRHVRSLKVENETEYIGLDPATRRNLELTETLRGTESPTLYSLLDTCCTTMGSRLLRHWLHHPPRASVAAQSRQQAIGALLDAPANASLDALRSALRQIADVERITGRLALLSARPRDLSSLRDTFAALPALRERISAIVANADALARVDAALAPPAECLDLLTSAIAPEPAAMVRDGGVIARGYDAELDELRDISENCGQFLIDLEARERARTGIANLRVEYNKVHGFYIEVTRGQTDKVPDDYRRRQTLKNAERYITPELKTFEDKALSAQERALARERALYDSVLQALLPFIPECQRVASALAELDLLAAFAERARALDWVAPTFTDEIGIEIEQGRHPVVEAQVEQFIANDCRFGTERKLLLITGPNMGGKSTFMRQTALIALMAYVGSYVPAKSACFGPIDRIFTRIGAADDLAGGRSTFMVEMTEAAAILNDATPQSLVLMDEIGRGTSTFDGLALAWAIARHLLAHNACYTLFATHYFELTQLPAEFPQAANVHLSAVEHGHGIVFLHAVNEGPANQSYGLQVAQLAGVPAPVIRAARKHLAYLEQQSASQHTPQLDLFSAPPAAVDDLECADAPALPDTPHPALEKLRDIDPDDLKPREALDLLYELRTLVRSHDADGHA</sequence>
<reference key="1">
    <citation type="submission" date="2008-02" db="EMBL/GenBank/DDBJ databases">
        <title>Complete sequence of chromosome 1 of Burkholderia cenocepacia MC0-3.</title>
        <authorList>
            <person name="Copeland A."/>
            <person name="Lucas S."/>
            <person name="Lapidus A."/>
            <person name="Barry K."/>
            <person name="Bruce D."/>
            <person name="Goodwin L."/>
            <person name="Glavina del Rio T."/>
            <person name="Dalin E."/>
            <person name="Tice H."/>
            <person name="Pitluck S."/>
            <person name="Chain P."/>
            <person name="Malfatti S."/>
            <person name="Shin M."/>
            <person name="Vergez L."/>
            <person name="Schmutz J."/>
            <person name="Larimer F."/>
            <person name="Land M."/>
            <person name="Hauser L."/>
            <person name="Kyrpides N."/>
            <person name="Mikhailova N."/>
            <person name="Tiedje J."/>
            <person name="Richardson P."/>
        </authorList>
    </citation>
    <scope>NUCLEOTIDE SEQUENCE [LARGE SCALE GENOMIC DNA]</scope>
    <source>
        <strain>MC0-3</strain>
    </source>
</reference>